<protein>
    <recommendedName>
        <fullName evidence="1">ATP-dependent 6-phosphofructokinase 1</fullName>
        <shortName evidence="1">ATP-PFK 1</shortName>
        <shortName evidence="1">Phosphofructokinase 1</shortName>
        <ecNumber evidence="1">2.7.1.11</ecNumber>
    </recommendedName>
    <alternativeName>
        <fullName evidence="1">Phosphohexokinase 1</fullName>
    </alternativeName>
</protein>
<comment type="function">
    <text evidence="1">Catalyzes the phosphorylation of D-fructose 6-phosphate to fructose 1,6-bisphosphate by ATP, the first committing step of glycolysis.</text>
</comment>
<comment type="catalytic activity">
    <reaction evidence="1">
        <text>beta-D-fructose 6-phosphate + ATP = beta-D-fructose 1,6-bisphosphate + ADP + H(+)</text>
        <dbReference type="Rhea" id="RHEA:16109"/>
        <dbReference type="ChEBI" id="CHEBI:15378"/>
        <dbReference type="ChEBI" id="CHEBI:30616"/>
        <dbReference type="ChEBI" id="CHEBI:32966"/>
        <dbReference type="ChEBI" id="CHEBI:57634"/>
        <dbReference type="ChEBI" id="CHEBI:456216"/>
        <dbReference type="EC" id="2.7.1.11"/>
    </reaction>
</comment>
<comment type="cofactor">
    <cofactor evidence="1">
        <name>Mg(2+)</name>
        <dbReference type="ChEBI" id="CHEBI:18420"/>
    </cofactor>
</comment>
<comment type="pathway">
    <text evidence="1">Carbohydrate degradation; glycolysis; D-glyceraldehyde 3-phosphate and glycerone phosphate from D-glucose: step 3/4.</text>
</comment>
<comment type="subunit">
    <text evidence="1">Homodimer or homotetramer.</text>
</comment>
<comment type="subcellular location">
    <subcellularLocation>
        <location evidence="1">Cytoplasm</location>
    </subcellularLocation>
</comment>
<comment type="similarity">
    <text evidence="1">Belongs to the phosphofructokinase type A (PFKA) family. Mixed-substrate PFK group III subfamily.</text>
</comment>
<gene>
    <name evidence="1" type="primary">pfkA1</name>
    <name type="ordered locus">all7335</name>
</gene>
<evidence type="ECO:0000255" key="1">
    <source>
        <dbReference type="HAMAP-Rule" id="MF_01976"/>
    </source>
</evidence>
<organism>
    <name type="scientific">Nostoc sp. (strain PCC 7120 / SAG 25.82 / UTEX 2576)</name>
    <dbReference type="NCBI Taxonomy" id="103690"/>
    <lineage>
        <taxon>Bacteria</taxon>
        <taxon>Bacillati</taxon>
        <taxon>Cyanobacteriota</taxon>
        <taxon>Cyanophyceae</taxon>
        <taxon>Nostocales</taxon>
        <taxon>Nostocaceae</taxon>
        <taxon>Nostoc</taxon>
    </lineage>
</organism>
<geneLocation type="plasmid">
    <name>pCC7120alpha</name>
</geneLocation>
<accession>Q8YKG3</accession>
<keyword id="KW-0067">ATP-binding</keyword>
<keyword id="KW-0963">Cytoplasm</keyword>
<keyword id="KW-0324">Glycolysis</keyword>
<keyword id="KW-0418">Kinase</keyword>
<keyword id="KW-0460">Magnesium</keyword>
<keyword id="KW-0479">Metal-binding</keyword>
<keyword id="KW-0547">Nucleotide-binding</keyword>
<keyword id="KW-0614">Plasmid</keyword>
<keyword id="KW-1185">Reference proteome</keyword>
<keyword id="KW-0808">Transferase</keyword>
<proteinExistence type="inferred from homology"/>
<name>PFKA1_NOSS1</name>
<feature type="chain" id="PRO_0000111929" description="ATP-dependent 6-phosphofructokinase 1">
    <location>
        <begin position="1"/>
        <end position="359"/>
    </location>
</feature>
<feature type="active site" description="Proton acceptor" evidence="1">
    <location>
        <position position="141"/>
    </location>
</feature>
<feature type="binding site" evidence="1">
    <location>
        <position position="14"/>
    </location>
    <ligand>
        <name>ATP</name>
        <dbReference type="ChEBI" id="CHEBI:30616"/>
    </ligand>
</feature>
<feature type="binding site" evidence="1">
    <location>
        <begin position="78"/>
        <end position="79"/>
    </location>
    <ligand>
        <name>ATP</name>
        <dbReference type="ChEBI" id="CHEBI:30616"/>
    </ligand>
</feature>
<feature type="binding site" evidence="1">
    <location>
        <begin position="115"/>
        <end position="118"/>
    </location>
    <ligand>
        <name>ATP</name>
        <dbReference type="ChEBI" id="CHEBI:30616"/>
    </ligand>
</feature>
<feature type="binding site" evidence="1">
    <location>
        <position position="116"/>
    </location>
    <ligand>
        <name>Mg(2+)</name>
        <dbReference type="ChEBI" id="CHEBI:18420"/>
        <note>catalytic</note>
    </ligand>
</feature>
<feature type="binding site" description="in other chain" evidence="1">
    <location>
        <begin position="139"/>
        <end position="141"/>
    </location>
    <ligand>
        <name>substrate</name>
        <note>ligand shared between dimeric partners</note>
    </ligand>
</feature>
<feature type="binding site" evidence="1">
    <location>
        <position position="176"/>
    </location>
    <ligand>
        <name>substrate</name>
        <note>ligand shared between dimeric partners</note>
    </ligand>
</feature>
<feature type="binding site" description="in other chain" evidence="1">
    <location>
        <begin position="183"/>
        <end position="185"/>
    </location>
    <ligand>
        <name>substrate</name>
        <note>ligand shared between dimeric partners</note>
    </ligand>
</feature>
<feature type="binding site" description="in other chain" evidence="1">
    <location>
        <position position="236"/>
    </location>
    <ligand>
        <name>substrate</name>
        <note>ligand shared between dimeric partners</note>
    </ligand>
</feature>
<feature type="binding site" evidence="1">
    <location>
        <position position="277"/>
    </location>
    <ligand>
        <name>substrate</name>
        <note>ligand shared between dimeric partners</note>
    </ligand>
</feature>
<feature type="binding site" description="in other chain" evidence="1">
    <location>
        <begin position="283"/>
        <end position="286"/>
    </location>
    <ligand>
        <name>substrate</name>
        <note>ligand shared between dimeric partners</note>
    </ligand>
</feature>
<feature type="site" description="Important for substrate specificity; cannot use PPi as phosphoryl donor" evidence="1">
    <location>
        <position position="117"/>
    </location>
</feature>
<sequence>MSKSRRIGILTSGGDCSGLNAVIRAVVHCASGKGWEVFGIRQATLGLMARPPQVSKLEIDQVDPLLTSGGTMLGTTNKGDPFAFPMPDGSFCDRSSEIIAGYHQLDLDALIGIGGDGSLAILRRLAQQGAINLVGIPKTIDNDIGITEHAIGFDTAVNIATEALDRLHFTAASHSRVMILEVMGRDAGHIALAAGIAGGADVILIPEILYSMDDICYHIKHRQEEGKNYCLIIVSEAVRTQDGEILTLTNRLGQSRYGGIGEYLADQISDRIGAETRVTVLGHIQRGGIASPLDRLVASAFGVAAVNLIEAAKYDYMVAWQNRQVITVPIEEAIAQYKAVNPEDALVKTARGLGIYLGE</sequence>
<reference key="1">
    <citation type="journal article" date="2001" name="DNA Res.">
        <title>Complete genomic sequence of the filamentous nitrogen-fixing cyanobacterium Anabaena sp. strain PCC 7120.</title>
        <authorList>
            <person name="Kaneko T."/>
            <person name="Nakamura Y."/>
            <person name="Wolk C.P."/>
            <person name="Kuritz T."/>
            <person name="Sasamoto S."/>
            <person name="Watanabe A."/>
            <person name="Iriguchi M."/>
            <person name="Ishikawa A."/>
            <person name="Kawashima K."/>
            <person name="Kimura T."/>
            <person name="Kishida Y."/>
            <person name="Kohara M."/>
            <person name="Matsumoto M."/>
            <person name="Matsuno A."/>
            <person name="Muraki A."/>
            <person name="Nakazaki N."/>
            <person name="Shimpo S."/>
            <person name="Sugimoto M."/>
            <person name="Takazawa M."/>
            <person name="Yamada M."/>
            <person name="Yasuda M."/>
            <person name="Tabata S."/>
        </authorList>
    </citation>
    <scope>NUCLEOTIDE SEQUENCE [LARGE SCALE GENOMIC DNA]</scope>
    <source>
        <strain>PCC 7120 / SAG 25.82 / UTEX 2576</strain>
    </source>
</reference>
<dbReference type="EC" id="2.7.1.11" evidence="1"/>
<dbReference type="EMBL" id="BA000020">
    <property type="protein sequence ID" value="BAB77093.1"/>
    <property type="molecule type" value="Genomic_DNA"/>
</dbReference>
<dbReference type="PIR" id="AG2519">
    <property type="entry name" value="AG2519"/>
</dbReference>
<dbReference type="RefSeq" id="WP_010999884.1">
    <property type="nucleotide sequence ID" value="NZ_JACJQQ010000062.1"/>
</dbReference>
<dbReference type="SMR" id="Q8YKG3"/>
<dbReference type="KEGG" id="ana:all7335"/>
<dbReference type="OrthoDB" id="9802503at2"/>
<dbReference type="UniPathway" id="UPA00109">
    <property type="reaction ID" value="UER00182"/>
</dbReference>
<dbReference type="Proteomes" id="UP000002483">
    <property type="component" value="Plasmid pCC7120alpha"/>
</dbReference>
<dbReference type="GO" id="GO:0005945">
    <property type="term" value="C:6-phosphofructokinase complex"/>
    <property type="evidence" value="ECO:0007669"/>
    <property type="project" value="TreeGrafter"/>
</dbReference>
<dbReference type="GO" id="GO:0003872">
    <property type="term" value="F:6-phosphofructokinase activity"/>
    <property type="evidence" value="ECO:0007669"/>
    <property type="project" value="UniProtKB-UniRule"/>
</dbReference>
<dbReference type="GO" id="GO:0016208">
    <property type="term" value="F:AMP binding"/>
    <property type="evidence" value="ECO:0007669"/>
    <property type="project" value="TreeGrafter"/>
</dbReference>
<dbReference type="GO" id="GO:0005524">
    <property type="term" value="F:ATP binding"/>
    <property type="evidence" value="ECO:0007669"/>
    <property type="project" value="UniProtKB-KW"/>
</dbReference>
<dbReference type="GO" id="GO:0047334">
    <property type="term" value="F:diphosphate-fructose-6-phosphate 1-phosphotransferase activity"/>
    <property type="evidence" value="ECO:0007669"/>
    <property type="project" value="InterPro"/>
</dbReference>
<dbReference type="GO" id="GO:0070095">
    <property type="term" value="F:fructose-6-phosphate binding"/>
    <property type="evidence" value="ECO:0007669"/>
    <property type="project" value="TreeGrafter"/>
</dbReference>
<dbReference type="GO" id="GO:0042802">
    <property type="term" value="F:identical protein binding"/>
    <property type="evidence" value="ECO:0007669"/>
    <property type="project" value="TreeGrafter"/>
</dbReference>
<dbReference type="GO" id="GO:0046872">
    <property type="term" value="F:metal ion binding"/>
    <property type="evidence" value="ECO:0007669"/>
    <property type="project" value="UniProtKB-KW"/>
</dbReference>
<dbReference type="GO" id="GO:0048029">
    <property type="term" value="F:monosaccharide binding"/>
    <property type="evidence" value="ECO:0007669"/>
    <property type="project" value="TreeGrafter"/>
</dbReference>
<dbReference type="GO" id="GO:0061621">
    <property type="term" value="P:canonical glycolysis"/>
    <property type="evidence" value="ECO:0007669"/>
    <property type="project" value="TreeGrafter"/>
</dbReference>
<dbReference type="GO" id="GO:0030388">
    <property type="term" value="P:fructose 1,6-bisphosphate metabolic process"/>
    <property type="evidence" value="ECO:0007669"/>
    <property type="project" value="TreeGrafter"/>
</dbReference>
<dbReference type="GO" id="GO:0006002">
    <property type="term" value="P:fructose 6-phosphate metabolic process"/>
    <property type="evidence" value="ECO:0007669"/>
    <property type="project" value="InterPro"/>
</dbReference>
<dbReference type="FunFam" id="3.40.50.460:FF:000002">
    <property type="entry name" value="ATP-dependent 6-phosphofructokinase"/>
    <property type="match status" value="1"/>
</dbReference>
<dbReference type="Gene3D" id="3.40.50.450">
    <property type="match status" value="1"/>
</dbReference>
<dbReference type="Gene3D" id="3.40.50.460">
    <property type="entry name" value="Phosphofructokinase domain"/>
    <property type="match status" value="1"/>
</dbReference>
<dbReference type="HAMAP" id="MF_01976">
    <property type="entry name" value="Phosphofructokinase_III"/>
    <property type="match status" value="1"/>
</dbReference>
<dbReference type="InterPro" id="IPR022953">
    <property type="entry name" value="ATP_PFK"/>
</dbReference>
<dbReference type="InterPro" id="IPR012003">
    <property type="entry name" value="ATP_PFK_prok-type"/>
</dbReference>
<dbReference type="InterPro" id="IPR015912">
    <property type="entry name" value="Phosphofructokinase_CS"/>
</dbReference>
<dbReference type="InterPro" id="IPR000023">
    <property type="entry name" value="Phosphofructokinase_dom"/>
</dbReference>
<dbReference type="InterPro" id="IPR012829">
    <property type="entry name" value="Phosphofructokinase_III"/>
</dbReference>
<dbReference type="InterPro" id="IPR035966">
    <property type="entry name" value="PKF_sf"/>
</dbReference>
<dbReference type="NCBIfam" id="NF002872">
    <property type="entry name" value="PRK03202.1"/>
    <property type="match status" value="1"/>
</dbReference>
<dbReference type="NCBIfam" id="NF010674">
    <property type="entry name" value="PRK14071.1"/>
    <property type="match status" value="1"/>
</dbReference>
<dbReference type="PANTHER" id="PTHR13697:SF52">
    <property type="entry name" value="ATP-DEPENDENT 6-PHOSPHOFRUCTOKINASE 3"/>
    <property type="match status" value="1"/>
</dbReference>
<dbReference type="PANTHER" id="PTHR13697">
    <property type="entry name" value="PHOSPHOFRUCTOKINASE"/>
    <property type="match status" value="1"/>
</dbReference>
<dbReference type="Pfam" id="PF00365">
    <property type="entry name" value="PFK"/>
    <property type="match status" value="1"/>
</dbReference>
<dbReference type="PIRSF" id="PIRSF000532">
    <property type="entry name" value="ATP_PFK_prok"/>
    <property type="match status" value="1"/>
</dbReference>
<dbReference type="PRINTS" id="PR00476">
    <property type="entry name" value="PHFRCTKINASE"/>
</dbReference>
<dbReference type="SUPFAM" id="SSF53784">
    <property type="entry name" value="Phosphofructokinase"/>
    <property type="match status" value="1"/>
</dbReference>
<dbReference type="PROSITE" id="PS00433">
    <property type="entry name" value="PHOSPHOFRUCTOKINASE"/>
    <property type="match status" value="1"/>
</dbReference>